<accession>Q8IZQ5</accession>
<accession>Q8N672</accession>
<reference key="1">
    <citation type="journal article" date="2003" name="Science">
        <title>Characterization of mammalian selenoproteomes.</title>
        <authorList>
            <person name="Kryukov G.V."/>
            <person name="Castellano S."/>
            <person name="Novoselov S.V."/>
            <person name="Lobanov A.V."/>
            <person name="Zehtab O."/>
            <person name="Guigo R."/>
            <person name="Gladyshev V.N."/>
        </authorList>
    </citation>
    <scope>NUCLEOTIDE SEQUENCE [MRNA]</scope>
</reference>
<reference key="2">
    <citation type="journal article" date="2004" name="Genome Res.">
        <title>The status, quality, and expansion of the NIH full-length cDNA project: the Mammalian Gene Collection (MGC).</title>
        <authorList>
            <consortium name="The MGC Project Team"/>
        </authorList>
    </citation>
    <scope>NUCLEOTIDE SEQUENCE [LARGE SCALE MRNA]</scope>
    <source>
        <tissue>B-cell</tissue>
    </source>
</reference>
<reference key="3">
    <citation type="journal article" date="2009" name="Science">
        <title>Lysine acetylation targets protein complexes and co-regulates major cellular functions.</title>
        <authorList>
            <person name="Choudhary C."/>
            <person name="Kumar C."/>
            <person name="Gnad F."/>
            <person name="Nielsen M.L."/>
            <person name="Rehman M."/>
            <person name="Walther T.C."/>
            <person name="Olsen J.V."/>
            <person name="Mann M."/>
        </authorList>
    </citation>
    <scope>ACETYLATION [LARGE SCALE ANALYSIS] AT LYS-20</scope>
    <scope>IDENTIFICATION BY MASS SPECTROMETRY [LARGE SCALE ANALYSIS]</scope>
</reference>
<reference key="4">
    <citation type="journal article" date="2011" name="BMC Syst. Biol.">
        <title>Initial characterization of the human central proteome.</title>
        <authorList>
            <person name="Burkard T.R."/>
            <person name="Planyavsky M."/>
            <person name="Kaupe I."/>
            <person name="Breitwieser F.P."/>
            <person name="Buerckstuemmer T."/>
            <person name="Bennett K.L."/>
            <person name="Superti-Furga G."/>
            <person name="Colinge J."/>
        </authorList>
    </citation>
    <scope>IDENTIFICATION BY MASS SPECTROMETRY [LARGE SCALE ANALYSIS]</scope>
</reference>
<reference key="5">
    <citation type="journal article" date="2014" name="J. Proteomics">
        <title>An enzyme assisted RP-RPLC approach for in-depth analysis of human liver phosphoproteome.</title>
        <authorList>
            <person name="Bian Y."/>
            <person name="Song C."/>
            <person name="Cheng K."/>
            <person name="Dong M."/>
            <person name="Wang F."/>
            <person name="Huang J."/>
            <person name="Sun D."/>
            <person name="Wang L."/>
            <person name="Ye M."/>
            <person name="Zou H."/>
        </authorList>
    </citation>
    <scope>IDENTIFICATION BY MASS SPECTROMETRY [LARGE SCALE ANALYSIS]</scope>
    <source>
        <tissue>Liver</tissue>
    </source>
</reference>
<reference key="6">
    <citation type="journal article" date="2016" name="J. Biol. Chem.">
        <title>Selenoprotein gene nomenclature.</title>
        <authorList>
            <person name="Gladyshev V.N."/>
            <person name="Arner E.S."/>
            <person name="Berry M.J."/>
            <person name="Brigelius-Flohe R."/>
            <person name="Bruford E.A."/>
            <person name="Burk R.F."/>
            <person name="Carlson B.A."/>
            <person name="Castellano S."/>
            <person name="Chavatte L."/>
            <person name="Conrad M."/>
            <person name="Copeland P.R."/>
            <person name="Diamond A.M."/>
            <person name="Driscoll D.M."/>
            <person name="Ferreiro A."/>
            <person name="Flohe L."/>
            <person name="Green F.R."/>
            <person name="Guigo R."/>
            <person name="Handy D.E."/>
            <person name="Hatfield D.L."/>
            <person name="Hesketh J."/>
            <person name="Hoffmann P.R."/>
            <person name="Holmgren A."/>
            <person name="Hondal R.J."/>
            <person name="Howard M.T."/>
            <person name="Huang K."/>
            <person name="Kim H.Y."/>
            <person name="Kim I.Y."/>
            <person name="Koehrle J."/>
            <person name="Krol A."/>
            <person name="Kryukov G.V."/>
            <person name="Lee B.J."/>
            <person name="Lee B.C."/>
            <person name="Lei X.G."/>
            <person name="Liu Q."/>
            <person name="Lescure A."/>
            <person name="Lobanov A.V."/>
            <person name="Loscalzo J."/>
            <person name="Maiorino M."/>
            <person name="Mariotti M."/>
            <person name="Sandeep Prabhu K."/>
            <person name="Rayman M.P."/>
            <person name="Rozovsky S."/>
            <person name="Salinas G."/>
            <person name="Schmidt E.E."/>
            <person name="Schomburg L."/>
            <person name="Schweizer U."/>
            <person name="Simonovic M."/>
            <person name="Sunde R.A."/>
            <person name="Tsuji P.A."/>
            <person name="Tweedie S."/>
            <person name="Ursini F."/>
            <person name="Whanger P.D."/>
            <person name="Zhang Y."/>
        </authorList>
    </citation>
    <scope>NOMENCLATURE</scope>
</reference>
<proteinExistence type="evidence at protein level"/>
<feature type="chain" id="PRO_0000097667" description="Selenoprotein H">
    <location>
        <begin position="1"/>
        <end position="122"/>
    </location>
</feature>
<feature type="non-standard amino acid" description="Selenocysteine">
    <location>
        <position position="44"/>
    </location>
</feature>
<feature type="modified residue" description="N6-acetyllysine" evidence="5">
    <location>
        <position position="20"/>
    </location>
</feature>
<feature type="cross-link" description="Cysteinyl-selenocysteine (Cys-Sec); redox-active" evidence="1">
    <location>
        <begin position="41"/>
        <end position="44"/>
    </location>
</feature>
<sequence length="122" mass="13453">MAPRGRKRKAEAAVVAVAEKREKLANGGEGMEEATVVIEHCTSURVYGRNAAALSQALRLEAPELPVKVNPTKPRRGSFEVTLLRPDGSSAELWTGIKKGPPRKLKFPEPQEVVEELKKYLS</sequence>
<protein>
    <recommendedName>
        <fullName evidence="3">Selenoprotein H</fullName>
        <shortName>SelH</shortName>
    </recommendedName>
</protein>
<keyword id="KW-0007">Acetylation</keyword>
<keyword id="KW-1267">Proteomics identification</keyword>
<keyword id="KW-0676">Redox-active center</keyword>
<keyword id="KW-1185">Reference proteome</keyword>
<keyword id="KW-0712">Selenocysteine</keyword>
<dbReference type="EMBL" id="AF536829">
    <property type="protein sequence ID" value="AAN61472.1"/>
    <property type="molecule type" value="mRNA"/>
</dbReference>
<dbReference type="EMBL" id="BC021122">
    <property type="protein sequence ID" value="AAH21122.2"/>
    <property type="molecule type" value="mRNA"/>
</dbReference>
<dbReference type="CCDS" id="CCDS44602.1"/>
<dbReference type="RefSeq" id="NP_001308264.1">
    <property type="nucleotide sequence ID" value="NM_001321335.2"/>
</dbReference>
<dbReference type="RefSeq" id="NP_734467.1">
    <property type="nucleotide sequence ID" value="NM_170746.4"/>
</dbReference>
<dbReference type="BioGRID" id="129373">
    <property type="interactions" value="39"/>
</dbReference>
<dbReference type="FunCoup" id="Q8IZQ5">
    <property type="interactions" value="668"/>
</dbReference>
<dbReference type="IntAct" id="Q8IZQ5">
    <property type="interactions" value="28"/>
</dbReference>
<dbReference type="STRING" id="9606.ENSP00000434511"/>
<dbReference type="BindingDB" id="Q8IZQ5"/>
<dbReference type="GlyGen" id="Q8IZQ5">
    <property type="glycosylation" value="1 site, 1 O-linked glycan (1 site)"/>
</dbReference>
<dbReference type="iPTMnet" id="Q8IZQ5"/>
<dbReference type="PhosphoSitePlus" id="Q8IZQ5"/>
<dbReference type="SwissPalm" id="Q8IZQ5"/>
<dbReference type="BioMuta" id="SELENOH"/>
<dbReference type="DMDM" id="190352213"/>
<dbReference type="jPOST" id="Q8IZQ5"/>
<dbReference type="MassIVE" id="Q8IZQ5"/>
<dbReference type="PaxDb" id="9606-ENSP00000373509"/>
<dbReference type="PeptideAtlas" id="Q8IZQ5"/>
<dbReference type="ProteomicsDB" id="71406"/>
<dbReference type="Pumba" id="Q8IZQ5"/>
<dbReference type="Antibodypedia" id="62795">
    <property type="antibodies" value="6 antibodies from 6 providers"/>
</dbReference>
<dbReference type="DNASU" id="280636"/>
<dbReference type="Ensembl" id="ENST00000388857.8">
    <property type="protein sequence ID" value="ENSP00000373509.4"/>
    <property type="gene ID" value="ENSG00000211450.11"/>
</dbReference>
<dbReference type="Ensembl" id="ENST00000534355.6">
    <property type="protein sequence ID" value="ENSP00000434511.1"/>
    <property type="gene ID" value="ENSG00000211450.11"/>
</dbReference>
<dbReference type="GeneID" id="280636"/>
<dbReference type="KEGG" id="hsa:280636"/>
<dbReference type="MANE-Select" id="ENST00000534355.6">
    <property type="protein sequence ID" value="ENSP00000434511.1"/>
    <property type="RefSeq nucleotide sequence ID" value="NM_170746.4"/>
    <property type="RefSeq protein sequence ID" value="NP_734467.1"/>
</dbReference>
<dbReference type="UCSC" id="uc021qjj.2">
    <property type="organism name" value="human"/>
</dbReference>
<dbReference type="AGR" id="HGNC:18251"/>
<dbReference type="CTD" id="280636"/>
<dbReference type="DisGeNET" id="280636"/>
<dbReference type="GeneCards" id="SELENOH"/>
<dbReference type="HGNC" id="HGNC:18251">
    <property type="gene designation" value="SELENOH"/>
</dbReference>
<dbReference type="HPA" id="ENSG00000211450">
    <property type="expression patterns" value="Low tissue specificity"/>
</dbReference>
<dbReference type="MIM" id="607914">
    <property type="type" value="gene"/>
</dbReference>
<dbReference type="neXtProt" id="NX_Q8IZQ5"/>
<dbReference type="OpenTargets" id="ENSG00000211450"/>
<dbReference type="PharmGKB" id="PA25495"/>
<dbReference type="VEuPathDB" id="HostDB:ENSG00000211450"/>
<dbReference type="eggNOG" id="ENOG502S3QJ">
    <property type="taxonomic scope" value="Eukaryota"/>
</dbReference>
<dbReference type="GeneTree" id="ENSGT00940000163915"/>
<dbReference type="HOGENOM" id="CLU_164858_0_0_1"/>
<dbReference type="InParanoid" id="Q8IZQ5"/>
<dbReference type="OMA" id="WHNAEEV"/>
<dbReference type="OrthoDB" id="1933874at2759"/>
<dbReference type="PAN-GO" id="Q8IZQ5">
    <property type="GO annotations" value="1 GO annotation based on evolutionary models"/>
</dbReference>
<dbReference type="PhylomeDB" id="Q8IZQ5"/>
<dbReference type="TreeFam" id="TF343373"/>
<dbReference type="PathwayCommons" id="Q8IZQ5"/>
<dbReference type="SignaLink" id="Q8IZQ5"/>
<dbReference type="BioGRID-ORCS" id="280636">
    <property type="hits" value="20 hits in 1147 CRISPR screens"/>
</dbReference>
<dbReference type="ChiTaRS" id="SELENOH">
    <property type="organism name" value="human"/>
</dbReference>
<dbReference type="GenomeRNAi" id="280636"/>
<dbReference type="Pharos" id="Q8IZQ5">
    <property type="development level" value="Tbio"/>
</dbReference>
<dbReference type="PRO" id="PR:Q8IZQ5"/>
<dbReference type="Proteomes" id="UP000005640">
    <property type="component" value="Chromosome 11"/>
</dbReference>
<dbReference type="RNAct" id="Q8IZQ5">
    <property type="molecule type" value="protein"/>
</dbReference>
<dbReference type="Bgee" id="ENSG00000211450">
    <property type="expression patterns" value="Expressed in right adrenal gland cortex and 158 other cell types or tissues"/>
</dbReference>
<dbReference type="ExpressionAtlas" id="Q8IZQ5">
    <property type="expression patterns" value="baseline and differential"/>
</dbReference>
<dbReference type="GO" id="GO:0005794">
    <property type="term" value="C:Golgi apparatus"/>
    <property type="evidence" value="ECO:0000318"/>
    <property type="project" value="GO_Central"/>
</dbReference>
<dbReference type="GO" id="GO:0003723">
    <property type="term" value="F:RNA binding"/>
    <property type="evidence" value="ECO:0007005"/>
    <property type="project" value="UniProtKB"/>
</dbReference>
<dbReference type="FunFam" id="3.40.30.10:FF:000269">
    <property type="entry name" value="Selenoprotein H"/>
    <property type="match status" value="1"/>
</dbReference>
<dbReference type="Gene3D" id="3.40.30.10">
    <property type="entry name" value="Glutaredoxin"/>
    <property type="match status" value="1"/>
</dbReference>
<dbReference type="InterPro" id="IPR011893">
    <property type="entry name" value="Selenoprotein_Rdx-typ"/>
</dbReference>
<dbReference type="InterPro" id="IPR052674">
    <property type="entry name" value="SelWTH-like"/>
</dbReference>
<dbReference type="InterPro" id="IPR036249">
    <property type="entry name" value="Thioredoxin-like_sf"/>
</dbReference>
<dbReference type="NCBIfam" id="TIGR02174">
    <property type="entry name" value="CXXU_selWTH"/>
    <property type="match status" value="1"/>
</dbReference>
<dbReference type="PANTHER" id="PTHR33638">
    <property type="entry name" value="SELENOPROTEIN H"/>
    <property type="match status" value="1"/>
</dbReference>
<dbReference type="PANTHER" id="PTHR33638:SF1">
    <property type="entry name" value="SELENOPROTEIN H"/>
    <property type="match status" value="1"/>
</dbReference>
<dbReference type="Pfam" id="PF10262">
    <property type="entry name" value="Rdx"/>
    <property type="match status" value="1"/>
</dbReference>
<dbReference type="SUPFAM" id="SSF52833">
    <property type="entry name" value="Thioredoxin-like"/>
    <property type="match status" value="1"/>
</dbReference>
<organism>
    <name type="scientific">Homo sapiens</name>
    <name type="common">Human</name>
    <dbReference type="NCBI Taxonomy" id="9606"/>
    <lineage>
        <taxon>Eukaryota</taxon>
        <taxon>Metazoa</taxon>
        <taxon>Chordata</taxon>
        <taxon>Craniata</taxon>
        <taxon>Vertebrata</taxon>
        <taxon>Euteleostomi</taxon>
        <taxon>Mammalia</taxon>
        <taxon>Eutheria</taxon>
        <taxon>Euarchontoglires</taxon>
        <taxon>Primates</taxon>
        <taxon>Haplorrhini</taxon>
        <taxon>Catarrhini</taxon>
        <taxon>Hominidae</taxon>
        <taxon>Homo</taxon>
    </lineage>
</organism>
<gene>
    <name evidence="2 4" type="primary">SELENOH</name>
    <name evidence="4" type="synonym">C11orf31</name>
    <name type="synonym">SELH</name>
</gene>
<comment type="function">
    <text evidence="3">May be involved in a redox-related process.</text>
</comment>
<comment type="similarity">
    <text evidence="3">Belongs to the SelWTH family.</text>
</comment>
<evidence type="ECO:0000250" key="1"/>
<evidence type="ECO:0000303" key="2">
    <source>
    </source>
</evidence>
<evidence type="ECO:0000305" key="3"/>
<evidence type="ECO:0000312" key="4">
    <source>
        <dbReference type="HGNC" id="HGNC:18251"/>
    </source>
</evidence>
<evidence type="ECO:0007744" key="5">
    <source>
    </source>
</evidence>
<name>SELH_HUMAN</name>